<dbReference type="EC" id="2.1.2.3" evidence="1"/>
<dbReference type="EC" id="3.5.4.10" evidence="1"/>
<dbReference type="EMBL" id="AJ938182">
    <property type="protein sequence ID" value="CAI80628.1"/>
    <property type="molecule type" value="Genomic_DNA"/>
</dbReference>
<dbReference type="RefSeq" id="WP_000709282.1">
    <property type="nucleotide sequence ID" value="NC_007622.1"/>
</dbReference>
<dbReference type="SMR" id="Q2YX50"/>
<dbReference type="KEGG" id="sab:SAB0940"/>
<dbReference type="HOGENOM" id="CLU_016316_5_2_9"/>
<dbReference type="UniPathway" id="UPA00074">
    <property type="reaction ID" value="UER00133"/>
</dbReference>
<dbReference type="UniPathway" id="UPA00074">
    <property type="reaction ID" value="UER00135"/>
</dbReference>
<dbReference type="GO" id="GO:0005829">
    <property type="term" value="C:cytosol"/>
    <property type="evidence" value="ECO:0007669"/>
    <property type="project" value="TreeGrafter"/>
</dbReference>
<dbReference type="GO" id="GO:0003937">
    <property type="term" value="F:IMP cyclohydrolase activity"/>
    <property type="evidence" value="ECO:0007669"/>
    <property type="project" value="UniProtKB-UniRule"/>
</dbReference>
<dbReference type="GO" id="GO:0004643">
    <property type="term" value="F:phosphoribosylaminoimidazolecarboxamide formyltransferase activity"/>
    <property type="evidence" value="ECO:0007669"/>
    <property type="project" value="UniProtKB-UniRule"/>
</dbReference>
<dbReference type="GO" id="GO:0006189">
    <property type="term" value="P:'de novo' IMP biosynthetic process"/>
    <property type="evidence" value="ECO:0007669"/>
    <property type="project" value="UniProtKB-UniRule"/>
</dbReference>
<dbReference type="CDD" id="cd01421">
    <property type="entry name" value="IMPCH"/>
    <property type="match status" value="1"/>
</dbReference>
<dbReference type="FunFam" id="3.40.140.20:FF:000001">
    <property type="entry name" value="Bifunctional purine biosynthesis protein PurH"/>
    <property type="match status" value="1"/>
</dbReference>
<dbReference type="FunFam" id="3.40.140.20:FF:000002">
    <property type="entry name" value="Bifunctional purine biosynthesis protein PurH"/>
    <property type="match status" value="1"/>
</dbReference>
<dbReference type="FunFam" id="3.40.50.1380:FF:000001">
    <property type="entry name" value="Bifunctional purine biosynthesis protein PurH"/>
    <property type="match status" value="1"/>
</dbReference>
<dbReference type="Gene3D" id="3.40.140.20">
    <property type="match status" value="2"/>
</dbReference>
<dbReference type="Gene3D" id="3.40.50.1380">
    <property type="entry name" value="Methylglyoxal synthase-like domain"/>
    <property type="match status" value="1"/>
</dbReference>
<dbReference type="HAMAP" id="MF_00139">
    <property type="entry name" value="PurH"/>
    <property type="match status" value="1"/>
</dbReference>
<dbReference type="InterPro" id="IPR024051">
    <property type="entry name" value="AICAR_Tfase_dup_dom_sf"/>
</dbReference>
<dbReference type="InterPro" id="IPR016193">
    <property type="entry name" value="Cytidine_deaminase-like"/>
</dbReference>
<dbReference type="InterPro" id="IPR011607">
    <property type="entry name" value="MGS-like_dom"/>
</dbReference>
<dbReference type="InterPro" id="IPR036914">
    <property type="entry name" value="MGS-like_dom_sf"/>
</dbReference>
<dbReference type="InterPro" id="IPR002695">
    <property type="entry name" value="PurH-like"/>
</dbReference>
<dbReference type="NCBIfam" id="NF002049">
    <property type="entry name" value="PRK00881.1"/>
    <property type="match status" value="1"/>
</dbReference>
<dbReference type="NCBIfam" id="TIGR00355">
    <property type="entry name" value="purH"/>
    <property type="match status" value="1"/>
</dbReference>
<dbReference type="PANTHER" id="PTHR11692:SF0">
    <property type="entry name" value="BIFUNCTIONAL PURINE BIOSYNTHESIS PROTEIN ATIC"/>
    <property type="match status" value="1"/>
</dbReference>
<dbReference type="PANTHER" id="PTHR11692">
    <property type="entry name" value="BIFUNCTIONAL PURINE BIOSYNTHESIS PROTEIN PURH"/>
    <property type="match status" value="1"/>
</dbReference>
<dbReference type="Pfam" id="PF01808">
    <property type="entry name" value="AICARFT_IMPCHas"/>
    <property type="match status" value="1"/>
</dbReference>
<dbReference type="Pfam" id="PF02142">
    <property type="entry name" value="MGS"/>
    <property type="match status" value="1"/>
</dbReference>
<dbReference type="PIRSF" id="PIRSF000414">
    <property type="entry name" value="AICARFT_IMPCHas"/>
    <property type="match status" value="1"/>
</dbReference>
<dbReference type="SMART" id="SM00798">
    <property type="entry name" value="AICARFT_IMPCHas"/>
    <property type="match status" value="1"/>
</dbReference>
<dbReference type="SMART" id="SM00851">
    <property type="entry name" value="MGS"/>
    <property type="match status" value="1"/>
</dbReference>
<dbReference type="SUPFAM" id="SSF53927">
    <property type="entry name" value="Cytidine deaminase-like"/>
    <property type="match status" value="1"/>
</dbReference>
<dbReference type="SUPFAM" id="SSF52335">
    <property type="entry name" value="Methylglyoxal synthase-like"/>
    <property type="match status" value="1"/>
</dbReference>
<dbReference type="PROSITE" id="PS51855">
    <property type="entry name" value="MGS"/>
    <property type="match status" value="1"/>
</dbReference>
<keyword id="KW-0378">Hydrolase</keyword>
<keyword id="KW-0511">Multifunctional enzyme</keyword>
<keyword id="KW-0658">Purine biosynthesis</keyword>
<keyword id="KW-0808">Transferase</keyword>
<feature type="chain" id="PRO_1000018963" description="Bifunctional purine biosynthesis protein PurH">
    <location>
        <begin position="1"/>
        <end position="492"/>
    </location>
</feature>
<feature type="domain" description="MGS-like" evidence="2">
    <location>
        <begin position="1"/>
        <end position="144"/>
    </location>
</feature>
<comment type="catalytic activity">
    <reaction evidence="1">
        <text>(6R)-10-formyltetrahydrofolate + 5-amino-1-(5-phospho-beta-D-ribosyl)imidazole-4-carboxamide = 5-formamido-1-(5-phospho-D-ribosyl)imidazole-4-carboxamide + (6S)-5,6,7,8-tetrahydrofolate</text>
        <dbReference type="Rhea" id="RHEA:22192"/>
        <dbReference type="ChEBI" id="CHEBI:57453"/>
        <dbReference type="ChEBI" id="CHEBI:58467"/>
        <dbReference type="ChEBI" id="CHEBI:58475"/>
        <dbReference type="ChEBI" id="CHEBI:195366"/>
        <dbReference type="EC" id="2.1.2.3"/>
    </reaction>
</comment>
<comment type="catalytic activity">
    <reaction evidence="1">
        <text>IMP + H2O = 5-formamido-1-(5-phospho-D-ribosyl)imidazole-4-carboxamide</text>
        <dbReference type="Rhea" id="RHEA:18445"/>
        <dbReference type="ChEBI" id="CHEBI:15377"/>
        <dbReference type="ChEBI" id="CHEBI:58053"/>
        <dbReference type="ChEBI" id="CHEBI:58467"/>
        <dbReference type="EC" id="3.5.4.10"/>
    </reaction>
</comment>
<comment type="pathway">
    <text evidence="1">Purine metabolism; IMP biosynthesis via de novo pathway; 5-formamido-1-(5-phospho-D-ribosyl)imidazole-4-carboxamide from 5-amino-1-(5-phospho-D-ribosyl)imidazole-4-carboxamide (10-formyl THF route): step 1/1.</text>
</comment>
<comment type="pathway">
    <text evidence="1">Purine metabolism; IMP biosynthesis via de novo pathway; IMP from 5-formamido-1-(5-phospho-D-ribosyl)imidazole-4-carboxamide: step 1/1.</text>
</comment>
<comment type="domain">
    <text evidence="1">The IMP cyclohydrolase activity resides in the N-terminal region.</text>
</comment>
<comment type="similarity">
    <text evidence="1">Belongs to the PurH family.</text>
</comment>
<evidence type="ECO:0000255" key="1">
    <source>
        <dbReference type="HAMAP-Rule" id="MF_00139"/>
    </source>
</evidence>
<evidence type="ECO:0000255" key="2">
    <source>
        <dbReference type="PROSITE-ProRule" id="PRU01202"/>
    </source>
</evidence>
<gene>
    <name evidence="1" type="primary">purH</name>
    <name type="ordered locus">SAB0940</name>
</gene>
<sequence length="492" mass="54318">MKKAILSVSNKTGIVEFAKALTQLNYELYSTGGTKRILDEANVPVRSVSDLTHFPEIMDGRVKTLHPAVHGGILADRNKPQHLNELSEQHIDLIDMVVVNLYPFQQTVANPDVTMDEAIENIDIGGPTMLRAAAKNYKHVTTIVHPADYQEVLTRLRNDSLDESYRQSLMIKVFEHTAEYDEAIVRFFKGDKETLRYGENPQQSAYFVRTSNAKHTIAGAKQLHGKQLSYNNIKDADATLALVKKFDTPAAVAVKHMNPCGVGIGDTIEQAFQHAYEADSQSIFGGIVALNRAVTPELAEQLHSIFLEVIIAPKFTDEALDILKQKKNVRLLEIDMTIDSNEEEFVSVSGGYLVQDKDNYVVPKEEMKVVTEVAPTDEQWEAMLLGWKVVPSVKSNAIILSNNKQTVGIGAGQMNRVGAAKIALERAIEINDHVALVSDGFFPMGDTVELAAQHGIKAIIQPGGSIKDQDSIDMANKHGIAMVVTGTRHFKH</sequence>
<organism>
    <name type="scientific">Staphylococcus aureus (strain bovine RF122 / ET3-1)</name>
    <dbReference type="NCBI Taxonomy" id="273036"/>
    <lineage>
        <taxon>Bacteria</taxon>
        <taxon>Bacillati</taxon>
        <taxon>Bacillota</taxon>
        <taxon>Bacilli</taxon>
        <taxon>Bacillales</taxon>
        <taxon>Staphylococcaceae</taxon>
        <taxon>Staphylococcus</taxon>
    </lineage>
</organism>
<accession>Q2YX50</accession>
<protein>
    <recommendedName>
        <fullName evidence="1">Bifunctional purine biosynthesis protein PurH</fullName>
    </recommendedName>
    <domain>
        <recommendedName>
            <fullName evidence="1">Phosphoribosylaminoimidazolecarboxamide formyltransferase</fullName>
            <ecNumber evidence="1">2.1.2.3</ecNumber>
        </recommendedName>
        <alternativeName>
            <fullName evidence="1">AICAR transformylase</fullName>
        </alternativeName>
    </domain>
    <domain>
        <recommendedName>
            <fullName evidence="1">IMP cyclohydrolase</fullName>
            <ecNumber evidence="1">3.5.4.10</ecNumber>
        </recommendedName>
        <alternativeName>
            <fullName evidence="1">ATIC</fullName>
        </alternativeName>
        <alternativeName>
            <fullName evidence="1">IMP synthase</fullName>
        </alternativeName>
        <alternativeName>
            <fullName evidence="1">Inosinicase</fullName>
        </alternativeName>
    </domain>
</protein>
<name>PUR9_STAAB</name>
<proteinExistence type="inferred from homology"/>
<reference key="1">
    <citation type="journal article" date="2007" name="PLoS ONE">
        <title>Molecular correlates of host specialization in Staphylococcus aureus.</title>
        <authorList>
            <person name="Herron-Olson L."/>
            <person name="Fitzgerald J.R."/>
            <person name="Musser J.M."/>
            <person name="Kapur V."/>
        </authorList>
    </citation>
    <scope>NUCLEOTIDE SEQUENCE [LARGE SCALE GENOMIC DNA]</scope>
    <source>
        <strain>bovine RF122 / ET3-1</strain>
    </source>
</reference>